<protein>
    <recommendedName>
        <fullName evidence="1">Bifunctional protein GlmU</fullName>
    </recommendedName>
    <domain>
        <recommendedName>
            <fullName evidence="1">UDP-N-acetylglucosamine pyrophosphorylase</fullName>
            <ecNumber evidence="1">2.7.7.23</ecNumber>
        </recommendedName>
        <alternativeName>
            <fullName evidence="1">N-acetylglucosamine-1-phosphate uridyltransferase</fullName>
        </alternativeName>
    </domain>
    <domain>
        <recommendedName>
            <fullName evidence="1">Glucosamine-1-phosphate N-acetyltransferase</fullName>
            <ecNumber evidence="1">2.3.1.157</ecNumber>
        </recommendedName>
    </domain>
</protein>
<gene>
    <name evidence="1" type="primary">glmU</name>
    <name type="ordered locus">SPO2797</name>
</gene>
<sequence length="450" mass="47490">MSTALVILAAGKGTRMKSDLPKVLHPIAHAPMLVHAMRAGAVLEPARTVIVAGHGAEAVRAAALDEDEGATVVLQEEQLGTAHAVDQARAALEGFEGDVVVLYGDTPFLQPDTLERMLAARKTHDLVILGFEAADPARYGRLVMQGDSLERIVEFKEATEQERAIRFCNSGLLACNAETLFALIAAVGNNNASGEYYLTDVVEIARKQGLAVTAVACDEAQTLGVNSRADLAAADAIFQTRARAELLDLGVTLMAPETVYLAADTVIGRDTVIEPNVVFGPGVTVESGATIRAFSHLEGCHVSRGAVVGPYARLRPGAELAENARIGNFVEIKNAEIGEGAKVNHLTYIGDASIGAGSNIGAGTITCNYDGVMKHRTTIGANVFIGSNTMLVAPVTLGDGAMTATGTVVTRDVEPDALAKARVKQENKPDRARKLFEMLRAKKASKQKET</sequence>
<evidence type="ECO:0000255" key="1">
    <source>
        <dbReference type="HAMAP-Rule" id="MF_01631"/>
    </source>
</evidence>
<reference key="1">
    <citation type="journal article" date="2004" name="Nature">
        <title>Genome sequence of Silicibacter pomeroyi reveals adaptations to the marine environment.</title>
        <authorList>
            <person name="Moran M.A."/>
            <person name="Buchan A."/>
            <person name="Gonzalez J.M."/>
            <person name="Heidelberg J.F."/>
            <person name="Whitman W.B."/>
            <person name="Kiene R.P."/>
            <person name="Henriksen J.R."/>
            <person name="King G.M."/>
            <person name="Belas R."/>
            <person name="Fuqua C."/>
            <person name="Brinkac L.M."/>
            <person name="Lewis M."/>
            <person name="Johri S."/>
            <person name="Weaver B."/>
            <person name="Pai G."/>
            <person name="Eisen J.A."/>
            <person name="Rahe E."/>
            <person name="Sheldon W.M."/>
            <person name="Ye W."/>
            <person name="Miller T.R."/>
            <person name="Carlton J."/>
            <person name="Rasko D.A."/>
            <person name="Paulsen I.T."/>
            <person name="Ren Q."/>
            <person name="Daugherty S.C."/>
            <person name="DeBoy R.T."/>
            <person name="Dodson R.J."/>
            <person name="Durkin A.S."/>
            <person name="Madupu R."/>
            <person name="Nelson W.C."/>
            <person name="Sullivan S.A."/>
            <person name="Rosovitz M.J."/>
            <person name="Haft D.H."/>
            <person name="Selengut J."/>
            <person name="Ward N."/>
        </authorList>
    </citation>
    <scope>NUCLEOTIDE SEQUENCE [LARGE SCALE GENOMIC DNA]</scope>
    <source>
        <strain>ATCC 700808 / DSM 15171 / DSS-3</strain>
    </source>
</reference>
<reference key="2">
    <citation type="journal article" date="2014" name="Stand. Genomic Sci.">
        <title>An updated genome annotation for the model marine bacterium Ruegeria pomeroyi DSS-3.</title>
        <authorList>
            <person name="Rivers A.R."/>
            <person name="Smith C.B."/>
            <person name="Moran M.A."/>
        </authorList>
    </citation>
    <scope>GENOME REANNOTATION</scope>
    <source>
        <strain>ATCC 700808 / DSM 15171 / DSS-3</strain>
    </source>
</reference>
<feature type="chain" id="PRO_0000233844" description="Bifunctional protein GlmU">
    <location>
        <begin position="1"/>
        <end position="450"/>
    </location>
</feature>
<feature type="region of interest" description="Pyrophosphorylase" evidence="1">
    <location>
        <begin position="1"/>
        <end position="228"/>
    </location>
</feature>
<feature type="region of interest" description="Linker" evidence="1">
    <location>
        <begin position="229"/>
        <end position="249"/>
    </location>
</feature>
<feature type="region of interest" description="N-acetyltransferase" evidence="1">
    <location>
        <begin position="250"/>
        <end position="450"/>
    </location>
</feature>
<feature type="active site" description="Proton acceptor" evidence="1">
    <location>
        <position position="345"/>
    </location>
</feature>
<feature type="binding site" evidence="1">
    <location>
        <begin position="8"/>
        <end position="11"/>
    </location>
    <ligand>
        <name>UDP-N-acetyl-alpha-D-glucosamine</name>
        <dbReference type="ChEBI" id="CHEBI:57705"/>
    </ligand>
</feature>
<feature type="binding site" evidence="1">
    <location>
        <position position="22"/>
    </location>
    <ligand>
        <name>UDP-N-acetyl-alpha-D-glucosamine</name>
        <dbReference type="ChEBI" id="CHEBI:57705"/>
    </ligand>
</feature>
<feature type="binding site" evidence="1">
    <location>
        <position position="75"/>
    </location>
    <ligand>
        <name>UDP-N-acetyl-alpha-D-glucosamine</name>
        <dbReference type="ChEBI" id="CHEBI:57705"/>
    </ligand>
</feature>
<feature type="binding site" evidence="1">
    <location>
        <begin position="80"/>
        <end position="81"/>
    </location>
    <ligand>
        <name>UDP-N-acetyl-alpha-D-glucosamine</name>
        <dbReference type="ChEBI" id="CHEBI:57705"/>
    </ligand>
</feature>
<feature type="binding site" evidence="1">
    <location>
        <begin position="103"/>
        <end position="105"/>
    </location>
    <ligand>
        <name>UDP-N-acetyl-alpha-D-glucosamine</name>
        <dbReference type="ChEBI" id="CHEBI:57705"/>
    </ligand>
</feature>
<feature type="binding site" evidence="1">
    <location>
        <position position="105"/>
    </location>
    <ligand>
        <name>Mg(2+)</name>
        <dbReference type="ChEBI" id="CHEBI:18420"/>
    </ligand>
</feature>
<feature type="binding site" evidence="1">
    <location>
        <position position="140"/>
    </location>
    <ligand>
        <name>UDP-N-acetyl-alpha-D-glucosamine</name>
        <dbReference type="ChEBI" id="CHEBI:57705"/>
    </ligand>
</feature>
<feature type="binding site" evidence="1">
    <location>
        <position position="154"/>
    </location>
    <ligand>
        <name>UDP-N-acetyl-alpha-D-glucosamine</name>
        <dbReference type="ChEBI" id="CHEBI:57705"/>
    </ligand>
</feature>
<feature type="binding site" evidence="1">
    <location>
        <position position="169"/>
    </location>
    <ligand>
        <name>UDP-N-acetyl-alpha-D-glucosamine</name>
        <dbReference type="ChEBI" id="CHEBI:57705"/>
    </ligand>
</feature>
<feature type="binding site" evidence="1">
    <location>
        <position position="226"/>
    </location>
    <ligand>
        <name>Mg(2+)</name>
        <dbReference type="ChEBI" id="CHEBI:18420"/>
    </ligand>
</feature>
<feature type="binding site" evidence="1">
    <location>
        <position position="226"/>
    </location>
    <ligand>
        <name>UDP-N-acetyl-alpha-D-glucosamine</name>
        <dbReference type="ChEBI" id="CHEBI:57705"/>
    </ligand>
</feature>
<feature type="binding site" evidence="1">
    <location>
        <position position="315"/>
    </location>
    <ligand>
        <name>UDP-N-acetyl-alpha-D-glucosamine</name>
        <dbReference type="ChEBI" id="CHEBI:57705"/>
    </ligand>
</feature>
<feature type="binding site" evidence="1">
    <location>
        <position position="333"/>
    </location>
    <ligand>
        <name>UDP-N-acetyl-alpha-D-glucosamine</name>
        <dbReference type="ChEBI" id="CHEBI:57705"/>
    </ligand>
</feature>
<feature type="binding site" evidence="1">
    <location>
        <position position="348"/>
    </location>
    <ligand>
        <name>UDP-N-acetyl-alpha-D-glucosamine</name>
        <dbReference type="ChEBI" id="CHEBI:57705"/>
    </ligand>
</feature>
<feature type="binding site" evidence="1">
    <location>
        <position position="359"/>
    </location>
    <ligand>
        <name>UDP-N-acetyl-alpha-D-glucosamine</name>
        <dbReference type="ChEBI" id="CHEBI:57705"/>
    </ligand>
</feature>
<feature type="binding site" evidence="1">
    <location>
        <position position="362"/>
    </location>
    <ligand>
        <name>acetyl-CoA</name>
        <dbReference type="ChEBI" id="CHEBI:57288"/>
    </ligand>
</feature>
<feature type="binding site" evidence="1">
    <location>
        <begin position="368"/>
        <end position="369"/>
    </location>
    <ligand>
        <name>acetyl-CoA</name>
        <dbReference type="ChEBI" id="CHEBI:57288"/>
    </ligand>
</feature>
<feature type="binding site" evidence="1">
    <location>
        <position position="387"/>
    </location>
    <ligand>
        <name>acetyl-CoA</name>
        <dbReference type="ChEBI" id="CHEBI:57288"/>
    </ligand>
</feature>
<feature type="binding site" evidence="1">
    <location>
        <position position="405"/>
    </location>
    <ligand>
        <name>acetyl-CoA</name>
        <dbReference type="ChEBI" id="CHEBI:57288"/>
    </ligand>
</feature>
<feature type="binding site" evidence="1">
    <location>
        <position position="422"/>
    </location>
    <ligand>
        <name>acetyl-CoA</name>
        <dbReference type="ChEBI" id="CHEBI:57288"/>
    </ligand>
</feature>
<keyword id="KW-0012">Acyltransferase</keyword>
<keyword id="KW-0133">Cell shape</keyword>
<keyword id="KW-0961">Cell wall biogenesis/degradation</keyword>
<keyword id="KW-0963">Cytoplasm</keyword>
<keyword id="KW-0460">Magnesium</keyword>
<keyword id="KW-0479">Metal-binding</keyword>
<keyword id="KW-0511">Multifunctional enzyme</keyword>
<keyword id="KW-0548">Nucleotidyltransferase</keyword>
<keyword id="KW-0573">Peptidoglycan synthesis</keyword>
<keyword id="KW-1185">Reference proteome</keyword>
<keyword id="KW-0677">Repeat</keyword>
<keyword id="KW-0808">Transferase</keyword>
<comment type="function">
    <text evidence="1">Catalyzes the last two sequential reactions in the de novo biosynthetic pathway for UDP-N-acetylglucosamine (UDP-GlcNAc). The C-terminal domain catalyzes the transfer of acetyl group from acetyl coenzyme A to glucosamine-1-phosphate (GlcN-1-P) to produce N-acetylglucosamine-1-phosphate (GlcNAc-1-P), which is converted into UDP-GlcNAc by the transfer of uridine 5-monophosphate (from uridine 5-triphosphate), a reaction catalyzed by the N-terminal domain.</text>
</comment>
<comment type="catalytic activity">
    <reaction evidence="1">
        <text>alpha-D-glucosamine 1-phosphate + acetyl-CoA = N-acetyl-alpha-D-glucosamine 1-phosphate + CoA + H(+)</text>
        <dbReference type="Rhea" id="RHEA:13725"/>
        <dbReference type="ChEBI" id="CHEBI:15378"/>
        <dbReference type="ChEBI" id="CHEBI:57287"/>
        <dbReference type="ChEBI" id="CHEBI:57288"/>
        <dbReference type="ChEBI" id="CHEBI:57776"/>
        <dbReference type="ChEBI" id="CHEBI:58516"/>
        <dbReference type="EC" id="2.3.1.157"/>
    </reaction>
</comment>
<comment type="catalytic activity">
    <reaction evidence="1">
        <text>N-acetyl-alpha-D-glucosamine 1-phosphate + UTP + H(+) = UDP-N-acetyl-alpha-D-glucosamine + diphosphate</text>
        <dbReference type="Rhea" id="RHEA:13509"/>
        <dbReference type="ChEBI" id="CHEBI:15378"/>
        <dbReference type="ChEBI" id="CHEBI:33019"/>
        <dbReference type="ChEBI" id="CHEBI:46398"/>
        <dbReference type="ChEBI" id="CHEBI:57705"/>
        <dbReference type="ChEBI" id="CHEBI:57776"/>
        <dbReference type="EC" id="2.7.7.23"/>
    </reaction>
</comment>
<comment type="cofactor">
    <cofactor evidence="1">
        <name>Mg(2+)</name>
        <dbReference type="ChEBI" id="CHEBI:18420"/>
    </cofactor>
    <text evidence="1">Binds 1 Mg(2+) ion per subunit.</text>
</comment>
<comment type="pathway">
    <text evidence="1">Nucleotide-sugar biosynthesis; UDP-N-acetyl-alpha-D-glucosamine biosynthesis; N-acetyl-alpha-D-glucosamine 1-phosphate from alpha-D-glucosamine 6-phosphate (route II): step 2/2.</text>
</comment>
<comment type="pathway">
    <text evidence="1">Nucleotide-sugar biosynthesis; UDP-N-acetyl-alpha-D-glucosamine biosynthesis; UDP-N-acetyl-alpha-D-glucosamine from N-acetyl-alpha-D-glucosamine 1-phosphate: step 1/1.</text>
</comment>
<comment type="pathway">
    <text evidence="1">Bacterial outer membrane biogenesis; LPS lipid A biosynthesis.</text>
</comment>
<comment type="subunit">
    <text evidence="1">Homotrimer.</text>
</comment>
<comment type="subcellular location">
    <subcellularLocation>
        <location evidence="1">Cytoplasm</location>
    </subcellularLocation>
</comment>
<comment type="similarity">
    <text evidence="1">In the N-terminal section; belongs to the N-acetylglucosamine-1-phosphate uridyltransferase family.</text>
</comment>
<comment type="similarity">
    <text evidence="1">In the C-terminal section; belongs to the transferase hexapeptide repeat family.</text>
</comment>
<name>GLMU_RUEPO</name>
<accession>Q5LPQ1</accession>
<dbReference type="EC" id="2.7.7.23" evidence="1"/>
<dbReference type="EC" id="2.3.1.157" evidence="1"/>
<dbReference type="EMBL" id="CP000031">
    <property type="protein sequence ID" value="AAV96038.1"/>
    <property type="molecule type" value="Genomic_DNA"/>
</dbReference>
<dbReference type="RefSeq" id="WP_011048497.1">
    <property type="nucleotide sequence ID" value="NC_003911.12"/>
</dbReference>
<dbReference type="SMR" id="Q5LPQ1"/>
<dbReference type="STRING" id="246200.SPO2797"/>
<dbReference type="PaxDb" id="246200-SPO2797"/>
<dbReference type="KEGG" id="sil:SPO2797"/>
<dbReference type="eggNOG" id="COG1207">
    <property type="taxonomic scope" value="Bacteria"/>
</dbReference>
<dbReference type="HOGENOM" id="CLU_029499_15_2_5"/>
<dbReference type="OrthoDB" id="9775031at2"/>
<dbReference type="UniPathway" id="UPA00113">
    <property type="reaction ID" value="UER00532"/>
</dbReference>
<dbReference type="UniPathway" id="UPA00113">
    <property type="reaction ID" value="UER00533"/>
</dbReference>
<dbReference type="UniPathway" id="UPA00973"/>
<dbReference type="Proteomes" id="UP000001023">
    <property type="component" value="Chromosome"/>
</dbReference>
<dbReference type="GO" id="GO:0005737">
    <property type="term" value="C:cytoplasm"/>
    <property type="evidence" value="ECO:0007669"/>
    <property type="project" value="UniProtKB-SubCell"/>
</dbReference>
<dbReference type="GO" id="GO:0016020">
    <property type="term" value="C:membrane"/>
    <property type="evidence" value="ECO:0007669"/>
    <property type="project" value="GOC"/>
</dbReference>
<dbReference type="GO" id="GO:0019134">
    <property type="term" value="F:glucosamine-1-phosphate N-acetyltransferase activity"/>
    <property type="evidence" value="ECO:0007669"/>
    <property type="project" value="UniProtKB-UniRule"/>
</dbReference>
<dbReference type="GO" id="GO:0000287">
    <property type="term" value="F:magnesium ion binding"/>
    <property type="evidence" value="ECO:0007669"/>
    <property type="project" value="UniProtKB-UniRule"/>
</dbReference>
<dbReference type="GO" id="GO:0003977">
    <property type="term" value="F:UDP-N-acetylglucosamine diphosphorylase activity"/>
    <property type="evidence" value="ECO:0007669"/>
    <property type="project" value="UniProtKB-UniRule"/>
</dbReference>
<dbReference type="GO" id="GO:0000902">
    <property type="term" value="P:cell morphogenesis"/>
    <property type="evidence" value="ECO:0007669"/>
    <property type="project" value="UniProtKB-UniRule"/>
</dbReference>
<dbReference type="GO" id="GO:0071555">
    <property type="term" value="P:cell wall organization"/>
    <property type="evidence" value="ECO:0007669"/>
    <property type="project" value="UniProtKB-KW"/>
</dbReference>
<dbReference type="GO" id="GO:0009245">
    <property type="term" value="P:lipid A biosynthetic process"/>
    <property type="evidence" value="ECO:0007669"/>
    <property type="project" value="UniProtKB-UniRule"/>
</dbReference>
<dbReference type="GO" id="GO:0009252">
    <property type="term" value="P:peptidoglycan biosynthetic process"/>
    <property type="evidence" value="ECO:0007669"/>
    <property type="project" value="UniProtKB-UniRule"/>
</dbReference>
<dbReference type="GO" id="GO:0008360">
    <property type="term" value="P:regulation of cell shape"/>
    <property type="evidence" value="ECO:0007669"/>
    <property type="project" value="UniProtKB-KW"/>
</dbReference>
<dbReference type="GO" id="GO:0006048">
    <property type="term" value="P:UDP-N-acetylglucosamine biosynthetic process"/>
    <property type="evidence" value="ECO:0007669"/>
    <property type="project" value="UniProtKB-UniPathway"/>
</dbReference>
<dbReference type="CDD" id="cd02540">
    <property type="entry name" value="GT2_GlmU_N_bac"/>
    <property type="match status" value="1"/>
</dbReference>
<dbReference type="CDD" id="cd03353">
    <property type="entry name" value="LbH_GlmU_C"/>
    <property type="match status" value="1"/>
</dbReference>
<dbReference type="Gene3D" id="2.160.10.10">
    <property type="entry name" value="Hexapeptide repeat proteins"/>
    <property type="match status" value="1"/>
</dbReference>
<dbReference type="Gene3D" id="3.90.550.10">
    <property type="entry name" value="Spore Coat Polysaccharide Biosynthesis Protein SpsA, Chain A"/>
    <property type="match status" value="1"/>
</dbReference>
<dbReference type="HAMAP" id="MF_01631">
    <property type="entry name" value="GlmU"/>
    <property type="match status" value="1"/>
</dbReference>
<dbReference type="InterPro" id="IPR005882">
    <property type="entry name" value="Bifunctional_GlmU"/>
</dbReference>
<dbReference type="InterPro" id="IPR050065">
    <property type="entry name" value="GlmU-like"/>
</dbReference>
<dbReference type="InterPro" id="IPR038009">
    <property type="entry name" value="GlmU_C_LbH"/>
</dbReference>
<dbReference type="InterPro" id="IPR001451">
    <property type="entry name" value="Hexapep"/>
</dbReference>
<dbReference type="InterPro" id="IPR025877">
    <property type="entry name" value="MobA-like_NTP_Trfase"/>
</dbReference>
<dbReference type="InterPro" id="IPR029044">
    <property type="entry name" value="Nucleotide-diphossugar_trans"/>
</dbReference>
<dbReference type="InterPro" id="IPR011004">
    <property type="entry name" value="Trimer_LpxA-like_sf"/>
</dbReference>
<dbReference type="NCBIfam" id="TIGR01173">
    <property type="entry name" value="glmU"/>
    <property type="match status" value="1"/>
</dbReference>
<dbReference type="NCBIfam" id="NF010933">
    <property type="entry name" value="PRK14353.1"/>
    <property type="match status" value="1"/>
</dbReference>
<dbReference type="PANTHER" id="PTHR43584:SF3">
    <property type="entry name" value="BIFUNCTIONAL PROTEIN GLMU"/>
    <property type="match status" value="1"/>
</dbReference>
<dbReference type="PANTHER" id="PTHR43584">
    <property type="entry name" value="NUCLEOTIDYL TRANSFERASE"/>
    <property type="match status" value="1"/>
</dbReference>
<dbReference type="Pfam" id="PF00132">
    <property type="entry name" value="Hexapep"/>
    <property type="match status" value="2"/>
</dbReference>
<dbReference type="Pfam" id="PF12804">
    <property type="entry name" value="NTP_transf_3"/>
    <property type="match status" value="1"/>
</dbReference>
<dbReference type="SUPFAM" id="SSF53448">
    <property type="entry name" value="Nucleotide-diphospho-sugar transferases"/>
    <property type="match status" value="1"/>
</dbReference>
<dbReference type="SUPFAM" id="SSF51161">
    <property type="entry name" value="Trimeric LpxA-like enzymes"/>
    <property type="match status" value="1"/>
</dbReference>
<organism>
    <name type="scientific">Ruegeria pomeroyi (strain ATCC 700808 / DSM 15171 / DSS-3)</name>
    <name type="common">Silicibacter pomeroyi</name>
    <dbReference type="NCBI Taxonomy" id="246200"/>
    <lineage>
        <taxon>Bacteria</taxon>
        <taxon>Pseudomonadati</taxon>
        <taxon>Pseudomonadota</taxon>
        <taxon>Alphaproteobacteria</taxon>
        <taxon>Rhodobacterales</taxon>
        <taxon>Roseobacteraceae</taxon>
        <taxon>Ruegeria</taxon>
    </lineage>
</organism>
<proteinExistence type="inferred from homology"/>